<sequence length="156" mass="16956">MNINATLIGQSVAFFIFVLFCMKFVWPPVIAALQERQKKIADGLDAANRAARDLELAHEKAGQQLREAKAQAAEIVEQAKKRANQIVDEARDQARAEGERLKAQAQAEIEQELNSVKDALRAQVGTLAVTGAEKILGASIDANAHEQLVSKLAAEI</sequence>
<accession>A6VF36</accession>
<gene>
    <name evidence="1" type="primary">atpF</name>
    <name type="ordered locus">PSPA7_6360</name>
</gene>
<evidence type="ECO:0000255" key="1">
    <source>
        <dbReference type="HAMAP-Rule" id="MF_01398"/>
    </source>
</evidence>
<keyword id="KW-0066">ATP synthesis</keyword>
<keyword id="KW-0997">Cell inner membrane</keyword>
<keyword id="KW-1003">Cell membrane</keyword>
<keyword id="KW-0138">CF(0)</keyword>
<keyword id="KW-0375">Hydrogen ion transport</keyword>
<keyword id="KW-0406">Ion transport</keyword>
<keyword id="KW-0472">Membrane</keyword>
<keyword id="KW-0812">Transmembrane</keyword>
<keyword id="KW-1133">Transmembrane helix</keyword>
<keyword id="KW-0813">Transport</keyword>
<feature type="chain" id="PRO_0000368683" description="ATP synthase subunit b">
    <location>
        <begin position="1"/>
        <end position="156"/>
    </location>
</feature>
<feature type="transmembrane region" description="Helical" evidence="1">
    <location>
        <begin position="12"/>
        <end position="32"/>
    </location>
</feature>
<comment type="function">
    <text evidence="1">F(1)F(0) ATP synthase produces ATP from ADP in the presence of a proton or sodium gradient. F-type ATPases consist of two structural domains, F(1) containing the extramembraneous catalytic core and F(0) containing the membrane proton channel, linked together by a central stalk and a peripheral stalk. During catalysis, ATP synthesis in the catalytic domain of F(1) is coupled via a rotary mechanism of the central stalk subunits to proton translocation.</text>
</comment>
<comment type="function">
    <text evidence="1">Component of the F(0) channel, it forms part of the peripheral stalk, linking F(1) to F(0).</text>
</comment>
<comment type="subunit">
    <text evidence="1">F-type ATPases have 2 components, F(1) - the catalytic core - and F(0) - the membrane proton channel. F(1) has five subunits: alpha(3), beta(3), gamma(1), delta(1), epsilon(1). F(0) has three main subunits: a(1), b(2) and c(10-14). The alpha and beta chains form an alternating ring which encloses part of the gamma chain. F(1) is attached to F(0) by a central stalk formed by the gamma and epsilon chains, while a peripheral stalk is formed by the delta and b chains.</text>
</comment>
<comment type="subcellular location">
    <subcellularLocation>
        <location evidence="1">Cell inner membrane</location>
        <topology evidence="1">Single-pass membrane protein</topology>
    </subcellularLocation>
</comment>
<comment type="similarity">
    <text evidence="1">Belongs to the ATPase B chain family.</text>
</comment>
<proteinExistence type="inferred from homology"/>
<protein>
    <recommendedName>
        <fullName evidence="1">ATP synthase subunit b</fullName>
    </recommendedName>
    <alternativeName>
        <fullName evidence="1">ATP synthase F(0) sector subunit b</fullName>
    </alternativeName>
    <alternativeName>
        <fullName evidence="1">ATPase subunit I</fullName>
    </alternativeName>
    <alternativeName>
        <fullName evidence="1">F-type ATPase subunit b</fullName>
        <shortName evidence="1">F-ATPase subunit b</shortName>
    </alternativeName>
</protein>
<dbReference type="EMBL" id="CP000744">
    <property type="protein sequence ID" value="ABR82716.1"/>
    <property type="molecule type" value="Genomic_DNA"/>
</dbReference>
<dbReference type="RefSeq" id="WP_012078097.1">
    <property type="nucleotide sequence ID" value="NC_009656.1"/>
</dbReference>
<dbReference type="SMR" id="A6VF36"/>
<dbReference type="GeneID" id="77224111"/>
<dbReference type="KEGG" id="pap:PSPA7_6360"/>
<dbReference type="HOGENOM" id="CLU_079215_4_5_6"/>
<dbReference type="Proteomes" id="UP000001582">
    <property type="component" value="Chromosome"/>
</dbReference>
<dbReference type="GO" id="GO:0005886">
    <property type="term" value="C:plasma membrane"/>
    <property type="evidence" value="ECO:0007669"/>
    <property type="project" value="UniProtKB-SubCell"/>
</dbReference>
<dbReference type="GO" id="GO:0045259">
    <property type="term" value="C:proton-transporting ATP synthase complex"/>
    <property type="evidence" value="ECO:0007669"/>
    <property type="project" value="UniProtKB-KW"/>
</dbReference>
<dbReference type="GO" id="GO:0046933">
    <property type="term" value="F:proton-transporting ATP synthase activity, rotational mechanism"/>
    <property type="evidence" value="ECO:0007669"/>
    <property type="project" value="UniProtKB-UniRule"/>
</dbReference>
<dbReference type="GO" id="GO:0046961">
    <property type="term" value="F:proton-transporting ATPase activity, rotational mechanism"/>
    <property type="evidence" value="ECO:0007669"/>
    <property type="project" value="TreeGrafter"/>
</dbReference>
<dbReference type="CDD" id="cd06503">
    <property type="entry name" value="ATP-synt_Fo_b"/>
    <property type="match status" value="1"/>
</dbReference>
<dbReference type="FunFam" id="1.20.5.620:FF:000001">
    <property type="entry name" value="ATP synthase subunit b"/>
    <property type="match status" value="1"/>
</dbReference>
<dbReference type="Gene3D" id="1.20.5.620">
    <property type="entry name" value="F1F0 ATP synthase subunit B, membrane domain"/>
    <property type="match status" value="1"/>
</dbReference>
<dbReference type="HAMAP" id="MF_01398">
    <property type="entry name" value="ATP_synth_b_bprime"/>
    <property type="match status" value="1"/>
</dbReference>
<dbReference type="InterPro" id="IPR028987">
    <property type="entry name" value="ATP_synth_B-like_membr_sf"/>
</dbReference>
<dbReference type="InterPro" id="IPR002146">
    <property type="entry name" value="ATP_synth_b/b'su_bac/chlpt"/>
</dbReference>
<dbReference type="InterPro" id="IPR005864">
    <property type="entry name" value="ATP_synth_F0_bsu_bac"/>
</dbReference>
<dbReference type="InterPro" id="IPR050059">
    <property type="entry name" value="ATP_synthase_B_chain"/>
</dbReference>
<dbReference type="NCBIfam" id="TIGR01144">
    <property type="entry name" value="ATP_synt_b"/>
    <property type="match status" value="1"/>
</dbReference>
<dbReference type="NCBIfam" id="NF004411">
    <property type="entry name" value="PRK05759.1-2"/>
    <property type="match status" value="1"/>
</dbReference>
<dbReference type="NCBIfam" id="NF004413">
    <property type="entry name" value="PRK05759.1-4"/>
    <property type="match status" value="1"/>
</dbReference>
<dbReference type="PANTHER" id="PTHR33445:SF1">
    <property type="entry name" value="ATP SYNTHASE SUBUNIT B"/>
    <property type="match status" value="1"/>
</dbReference>
<dbReference type="PANTHER" id="PTHR33445">
    <property type="entry name" value="ATP SYNTHASE SUBUNIT B', CHLOROPLASTIC"/>
    <property type="match status" value="1"/>
</dbReference>
<dbReference type="Pfam" id="PF00430">
    <property type="entry name" value="ATP-synt_B"/>
    <property type="match status" value="1"/>
</dbReference>
<dbReference type="SUPFAM" id="SSF81573">
    <property type="entry name" value="F1F0 ATP synthase subunit B, membrane domain"/>
    <property type="match status" value="1"/>
</dbReference>
<organism>
    <name type="scientific">Pseudomonas paraeruginosa (strain DSM 24068 / PA7)</name>
    <name type="common">Pseudomonas aeruginosa (strain PA7)</name>
    <dbReference type="NCBI Taxonomy" id="381754"/>
    <lineage>
        <taxon>Bacteria</taxon>
        <taxon>Pseudomonadati</taxon>
        <taxon>Pseudomonadota</taxon>
        <taxon>Gammaproteobacteria</taxon>
        <taxon>Pseudomonadales</taxon>
        <taxon>Pseudomonadaceae</taxon>
        <taxon>Pseudomonas</taxon>
        <taxon>Pseudomonas paraeruginosa</taxon>
    </lineage>
</organism>
<reference key="1">
    <citation type="submission" date="2007-06" db="EMBL/GenBank/DDBJ databases">
        <authorList>
            <person name="Dodson R.J."/>
            <person name="Harkins D."/>
            <person name="Paulsen I.T."/>
        </authorList>
    </citation>
    <scope>NUCLEOTIDE SEQUENCE [LARGE SCALE GENOMIC DNA]</scope>
    <source>
        <strain>DSM 24068 / PA7</strain>
    </source>
</reference>
<name>ATPF_PSEP7</name>